<gene>
    <name evidence="1" type="primary">xpt</name>
    <name type="ordered locus">Deide_04030</name>
</gene>
<accession>C1CZX7</accession>
<sequence length="193" mass="20338">MRALVDAIRAQGTVLPGGILKVDGLINHQLLPQLTREMGETFARSFGPLKPTKVVTIEVSGIAPALATSMVLGVPMVYARKKRPVTMQGPVYTAQSVSRTKGGVVELFVSHEYLSADDRVVVIDDFLASGGTLLALAGMIRESGAQLLGMGCVVEKAFENGRANLASLGVPVRTLANIVRMDEGGTLVVEAGH</sequence>
<name>XPT_DEIDV</name>
<protein>
    <recommendedName>
        <fullName evidence="1">Xanthine phosphoribosyltransferase</fullName>
        <shortName evidence="1">XPRTase</shortName>
        <ecNumber evidence="1">2.4.2.22</ecNumber>
    </recommendedName>
</protein>
<reference key="1">
    <citation type="journal article" date="2009" name="PLoS Genet.">
        <title>Alliance of proteomics and genomics to unravel the specificities of Sahara bacterium Deinococcus deserti.</title>
        <authorList>
            <person name="de Groot A."/>
            <person name="Dulermo R."/>
            <person name="Ortet P."/>
            <person name="Blanchard L."/>
            <person name="Guerin P."/>
            <person name="Fernandez B."/>
            <person name="Vacherie B."/>
            <person name="Dossat C."/>
            <person name="Jolivet E."/>
            <person name="Siguier P."/>
            <person name="Chandler M."/>
            <person name="Barakat M."/>
            <person name="Dedieu A."/>
            <person name="Barbe V."/>
            <person name="Heulin T."/>
            <person name="Sommer S."/>
            <person name="Achouak W."/>
            <person name="Armengaud J."/>
        </authorList>
    </citation>
    <scope>NUCLEOTIDE SEQUENCE [LARGE SCALE GENOMIC DNA]</scope>
    <source>
        <strain>DSM 17065 / CIP 109153 / LMG 22923 / VCD115</strain>
    </source>
</reference>
<comment type="function">
    <text evidence="1">Converts the preformed base xanthine, a product of nucleic acid breakdown, to xanthosine 5'-monophosphate (XMP), so it can be reused for RNA or DNA synthesis.</text>
</comment>
<comment type="catalytic activity">
    <reaction evidence="1">
        <text>XMP + diphosphate = xanthine + 5-phospho-alpha-D-ribose 1-diphosphate</text>
        <dbReference type="Rhea" id="RHEA:10800"/>
        <dbReference type="ChEBI" id="CHEBI:17712"/>
        <dbReference type="ChEBI" id="CHEBI:33019"/>
        <dbReference type="ChEBI" id="CHEBI:57464"/>
        <dbReference type="ChEBI" id="CHEBI:58017"/>
        <dbReference type="EC" id="2.4.2.22"/>
    </reaction>
</comment>
<comment type="pathway">
    <text evidence="1">Purine metabolism; XMP biosynthesis via salvage pathway; XMP from xanthine: step 1/1.</text>
</comment>
<comment type="subunit">
    <text evidence="1">Homodimer.</text>
</comment>
<comment type="subcellular location">
    <subcellularLocation>
        <location evidence="1">Cytoplasm</location>
    </subcellularLocation>
</comment>
<comment type="similarity">
    <text evidence="1">Belongs to the purine/pyrimidine phosphoribosyltransferase family. Xpt subfamily.</text>
</comment>
<keyword id="KW-0963">Cytoplasm</keyword>
<keyword id="KW-0328">Glycosyltransferase</keyword>
<keyword id="KW-0660">Purine salvage</keyword>
<keyword id="KW-1185">Reference proteome</keyword>
<keyword id="KW-0808">Transferase</keyword>
<feature type="chain" id="PRO_1000213765" description="Xanthine phosphoribosyltransferase">
    <location>
        <begin position="1"/>
        <end position="193"/>
    </location>
</feature>
<feature type="binding site" evidence="1">
    <location>
        <position position="20"/>
    </location>
    <ligand>
        <name>xanthine</name>
        <dbReference type="ChEBI" id="CHEBI:17712"/>
    </ligand>
</feature>
<feature type="binding site" evidence="1">
    <location>
        <position position="27"/>
    </location>
    <ligand>
        <name>xanthine</name>
        <dbReference type="ChEBI" id="CHEBI:17712"/>
    </ligand>
</feature>
<feature type="binding site" evidence="1">
    <location>
        <begin position="128"/>
        <end position="132"/>
    </location>
    <ligand>
        <name>5-phospho-alpha-D-ribose 1-diphosphate</name>
        <dbReference type="ChEBI" id="CHEBI:58017"/>
    </ligand>
</feature>
<feature type="binding site" evidence="1">
    <location>
        <position position="156"/>
    </location>
    <ligand>
        <name>xanthine</name>
        <dbReference type="ChEBI" id="CHEBI:17712"/>
    </ligand>
</feature>
<proteinExistence type="inferred from homology"/>
<dbReference type="EC" id="2.4.2.22" evidence="1"/>
<dbReference type="EMBL" id="CP001114">
    <property type="protein sequence ID" value="ACO45229.1"/>
    <property type="molecule type" value="Genomic_DNA"/>
</dbReference>
<dbReference type="RefSeq" id="WP_012692352.1">
    <property type="nucleotide sequence ID" value="NC_012526.1"/>
</dbReference>
<dbReference type="SMR" id="C1CZX7"/>
<dbReference type="STRING" id="546414.Deide_04030"/>
<dbReference type="PaxDb" id="546414-Deide_04030"/>
<dbReference type="KEGG" id="ddr:Deide_04030"/>
<dbReference type="eggNOG" id="COG0503">
    <property type="taxonomic scope" value="Bacteria"/>
</dbReference>
<dbReference type="HOGENOM" id="CLU_099015_0_0_0"/>
<dbReference type="OrthoDB" id="9790678at2"/>
<dbReference type="UniPathway" id="UPA00602">
    <property type="reaction ID" value="UER00658"/>
</dbReference>
<dbReference type="Proteomes" id="UP000002208">
    <property type="component" value="Chromosome"/>
</dbReference>
<dbReference type="GO" id="GO:0005737">
    <property type="term" value="C:cytoplasm"/>
    <property type="evidence" value="ECO:0007669"/>
    <property type="project" value="UniProtKB-SubCell"/>
</dbReference>
<dbReference type="GO" id="GO:0000310">
    <property type="term" value="F:xanthine phosphoribosyltransferase activity"/>
    <property type="evidence" value="ECO:0007669"/>
    <property type="project" value="UniProtKB-UniRule"/>
</dbReference>
<dbReference type="GO" id="GO:0006166">
    <property type="term" value="P:purine ribonucleoside salvage"/>
    <property type="evidence" value="ECO:0007669"/>
    <property type="project" value="UniProtKB-KW"/>
</dbReference>
<dbReference type="GO" id="GO:0046110">
    <property type="term" value="P:xanthine metabolic process"/>
    <property type="evidence" value="ECO:0007669"/>
    <property type="project" value="InterPro"/>
</dbReference>
<dbReference type="GO" id="GO:0032265">
    <property type="term" value="P:XMP salvage"/>
    <property type="evidence" value="ECO:0007669"/>
    <property type="project" value="UniProtKB-UniRule"/>
</dbReference>
<dbReference type="CDD" id="cd06223">
    <property type="entry name" value="PRTases_typeI"/>
    <property type="match status" value="1"/>
</dbReference>
<dbReference type="Gene3D" id="3.40.50.2020">
    <property type="match status" value="1"/>
</dbReference>
<dbReference type="HAMAP" id="MF_01184">
    <property type="entry name" value="XPRTase"/>
    <property type="match status" value="1"/>
</dbReference>
<dbReference type="InterPro" id="IPR000836">
    <property type="entry name" value="PRibTrfase_dom"/>
</dbReference>
<dbReference type="InterPro" id="IPR029057">
    <property type="entry name" value="PRTase-like"/>
</dbReference>
<dbReference type="InterPro" id="IPR050118">
    <property type="entry name" value="Pur/Pyrimidine_PRTase"/>
</dbReference>
<dbReference type="InterPro" id="IPR010079">
    <property type="entry name" value="Xanthine_PRibTrfase"/>
</dbReference>
<dbReference type="NCBIfam" id="NF006671">
    <property type="entry name" value="PRK09219.1"/>
    <property type="match status" value="1"/>
</dbReference>
<dbReference type="NCBIfam" id="TIGR01744">
    <property type="entry name" value="XPRTase"/>
    <property type="match status" value="1"/>
</dbReference>
<dbReference type="PANTHER" id="PTHR43864">
    <property type="entry name" value="HYPOXANTHINE/GUANINE PHOSPHORIBOSYLTRANSFERASE"/>
    <property type="match status" value="1"/>
</dbReference>
<dbReference type="PANTHER" id="PTHR43864:SF1">
    <property type="entry name" value="XANTHINE PHOSPHORIBOSYLTRANSFERASE"/>
    <property type="match status" value="1"/>
</dbReference>
<dbReference type="Pfam" id="PF00156">
    <property type="entry name" value="Pribosyltran"/>
    <property type="match status" value="1"/>
</dbReference>
<dbReference type="SUPFAM" id="SSF53271">
    <property type="entry name" value="PRTase-like"/>
    <property type="match status" value="1"/>
</dbReference>
<evidence type="ECO:0000255" key="1">
    <source>
        <dbReference type="HAMAP-Rule" id="MF_01184"/>
    </source>
</evidence>
<organism>
    <name type="scientific">Deinococcus deserti (strain DSM 17065 / CIP 109153 / LMG 22923 / VCD115)</name>
    <dbReference type="NCBI Taxonomy" id="546414"/>
    <lineage>
        <taxon>Bacteria</taxon>
        <taxon>Thermotogati</taxon>
        <taxon>Deinococcota</taxon>
        <taxon>Deinococci</taxon>
        <taxon>Deinococcales</taxon>
        <taxon>Deinococcaceae</taxon>
        <taxon>Deinococcus</taxon>
    </lineage>
</organism>